<organism>
    <name type="scientific">Rickettsia prowazekii (strain Madrid E)</name>
    <dbReference type="NCBI Taxonomy" id="272947"/>
    <lineage>
        <taxon>Bacteria</taxon>
        <taxon>Pseudomonadati</taxon>
        <taxon>Pseudomonadota</taxon>
        <taxon>Alphaproteobacteria</taxon>
        <taxon>Rickettsiales</taxon>
        <taxon>Rickettsiaceae</taxon>
        <taxon>Rickettsieae</taxon>
        <taxon>Rickettsia</taxon>
        <taxon>typhus group</taxon>
    </lineage>
</organism>
<accession>Q9ZCB8</accession>
<keyword id="KW-0012">Acyltransferase</keyword>
<keyword id="KW-0350">Heme biosynthesis</keyword>
<keyword id="KW-0663">Pyridoxal phosphate</keyword>
<keyword id="KW-1185">Reference proteome</keyword>
<keyword id="KW-0808">Transferase</keyword>
<name>HEM1_RICPR</name>
<protein>
    <recommendedName>
        <fullName>5-aminolevulinate synthase</fullName>
        <ecNumber>2.3.1.37</ecNumber>
    </recommendedName>
    <alternativeName>
        <fullName>5-aminolevulinic acid synthase</fullName>
    </alternativeName>
    <alternativeName>
        <fullName>Delta-ALA synthase</fullName>
    </alternativeName>
    <alternativeName>
        <fullName>Delta-aminolevulinate synthase</fullName>
    </alternativeName>
</protein>
<proteinExistence type="inferred from homology"/>
<reference key="1">
    <citation type="journal article" date="1998" name="Nature">
        <title>The genome sequence of Rickettsia prowazekii and the origin of mitochondria.</title>
        <authorList>
            <person name="Andersson S.G.E."/>
            <person name="Zomorodipour A."/>
            <person name="Andersson J.O."/>
            <person name="Sicheritz-Ponten T."/>
            <person name="Alsmark U.C.M."/>
            <person name="Podowski R.M."/>
            <person name="Naeslund A.K."/>
            <person name="Eriksson A.-S."/>
            <person name="Winkler H.H."/>
            <person name="Kurland C.G."/>
        </authorList>
    </citation>
    <scope>NUCLEOTIDE SEQUENCE [LARGE SCALE GENOMIC DNA]</scope>
    <source>
        <strain>Madrid E</strain>
    </source>
</reference>
<sequence>MSYYDTIFNKHIDKIKSEGRYREFKSLKRQADNFPFAEYEDKQIVMWCINDYLGMSKHVKVMQASIDALLKYGVGSGGTRNIGGNNISILELEKELADLHSKETALVFTSGFVANDTTLASLAKIIPDIVFFSDELNHASIIAGIKSSRAEKYVYRHLDVQHLEKLLQSVDINKPKIIVFESAYSMDGFFSPIKDIINLAKKYNALTFIDEVHTVGLYGKQGGGISELLDCSNQIDIIQGTLAKAYGTIGGYITSNYNLIDAIRLTAPGFIFTTSLPPVISTAATHSIRHLKESNEERIKHQEVVTKLKNSFEHFNIPYLKNESHIIPIIIGDPIKATKVSNMLLNEYGIYVQHINFPTVPRGTERLRIIPTPAHTDKMINDLSTALVHIFDELDIELSSAKELNKEVRLHLIA</sequence>
<dbReference type="EC" id="2.3.1.37"/>
<dbReference type="EMBL" id="AJ235273">
    <property type="protein sequence ID" value="CAA15265.1"/>
    <property type="molecule type" value="Genomic_DNA"/>
</dbReference>
<dbReference type="PIR" id="A71646">
    <property type="entry name" value="A71646"/>
</dbReference>
<dbReference type="RefSeq" id="NP_221189.1">
    <property type="nucleotide sequence ID" value="NC_000963.1"/>
</dbReference>
<dbReference type="RefSeq" id="WP_004596804.1">
    <property type="nucleotide sequence ID" value="NC_000963.1"/>
</dbReference>
<dbReference type="SMR" id="Q9ZCB8"/>
<dbReference type="STRING" id="272947.gene:17555910"/>
<dbReference type="EnsemblBacteria" id="CAA15265">
    <property type="protein sequence ID" value="CAA15265"/>
    <property type="gene ID" value="CAA15265"/>
</dbReference>
<dbReference type="GeneID" id="57569964"/>
<dbReference type="KEGG" id="rpr:RP841"/>
<dbReference type="PATRIC" id="fig|272947.5.peg.879"/>
<dbReference type="eggNOG" id="COG0156">
    <property type="taxonomic scope" value="Bacteria"/>
</dbReference>
<dbReference type="HOGENOM" id="CLU_015846_11_1_5"/>
<dbReference type="OrthoDB" id="9807157at2"/>
<dbReference type="UniPathway" id="UPA00251">
    <property type="reaction ID" value="UER00375"/>
</dbReference>
<dbReference type="Proteomes" id="UP000002480">
    <property type="component" value="Chromosome"/>
</dbReference>
<dbReference type="GO" id="GO:0003870">
    <property type="term" value="F:5-aminolevulinate synthase activity"/>
    <property type="evidence" value="ECO:0007669"/>
    <property type="project" value="UniProtKB-EC"/>
</dbReference>
<dbReference type="GO" id="GO:0030170">
    <property type="term" value="F:pyridoxal phosphate binding"/>
    <property type="evidence" value="ECO:0007669"/>
    <property type="project" value="InterPro"/>
</dbReference>
<dbReference type="GO" id="GO:0006782">
    <property type="term" value="P:protoporphyrinogen IX biosynthetic process"/>
    <property type="evidence" value="ECO:0007669"/>
    <property type="project" value="UniProtKB-UniPathway"/>
</dbReference>
<dbReference type="CDD" id="cd06454">
    <property type="entry name" value="KBL_like"/>
    <property type="match status" value="1"/>
</dbReference>
<dbReference type="FunFam" id="3.40.640.10:FF:000006">
    <property type="entry name" value="5-aminolevulinate synthase, mitochondrial"/>
    <property type="match status" value="1"/>
</dbReference>
<dbReference type="Gene3D" id="3.90.1150.10">
    <property type="entry name" value="Aspartate Aminotransferase, domain 1"/>
    <property type="match status" value="1"/>
</dbReference>
<dbReference type="Gene3D" id="3.40.640.10">
    <property type="entry name" value="Type I PLP-dependent aspartate aminotransferase-like (Major domain)"/>
    <property type="match status" value="1"/>
</dbReference>
<dbReference type="InterPro" id="IPR010961">
    <property type="entry name" value="4pyrrol_synth_NH2levulA_synth"/>
</dbReference>
<dbReference type="InterPro" id="IPR001917">
    <property type="entry name" value="Aminotrans_II_pyridoxalP_BS"/>
</dbReference>
<dbReference type="InterPro" id="IPR004839">
    <property type="entry name" value="Aminotransferase_I/II_large"/>
</dbReference>
<dbReference type="InterPro" id="IPR050087">
    <property type="entry name" value="AON_synthase_class-II"/>
</dbReference>
<dbReference type="InterPro" id="IPR015424">
    <property type="entry name" value="PyrdxlP-dep_Trfase"/>
</dbReference>
<dbReference type="InterPro" id="IPR015421">
    <property type="entry name" value="PyrdxlP-dep_Trfase_major"/>
</dbReference>
<dbReference type="InterPro" id="IPR015422">
    <property type="entry name" value="PyrdxlP-dep_Trfase_small"/>
</dbReference>
<dbReference type="NCBIfam" id="TIGR01821">
    <property type="entry name" value="5aminolev_synth"/>
    <property type="match status" value="1"/>
</dbReference>
<dbReference type="PANTHER" id="PTHR13693:SF102">
    <property type="entry name" value="2-AMINO-3-KETOBUTYRATE COENZYME A LIGASE, MITOCHONDRIAL"/>
    <property type="match status" value="1"/>
</dbReference>
<dbReference type="PANTHER" id="PTHR13693">
    <property type="entry name" value="CLASS II AMINOTRANSFERASE/8-AMINO-7-OXONONANOATE SYNTHASE"/>
    <property type="match status" value="1"/>
</dbReference>
<dbReference type="Pfam" id="PF00155">
    <property type="entry name" value="Aminotran_1_2"/>
    <property type="match status" value="1"/>
</dbReference>
<dbReference type="SUPFAM" id="SSF53383">
    <property type="entry name" value="PLP-dependent transferases"/>
    <property type="match status" value="1"/>
</dbReference>
<dbReference type="PROSITE" id="PS00599">
    <property type="entry name" value="AA_TRANSFER_CLASS_2"/>
    <property type="match status" value="1"/>
</dbReference>
<gene>
    <name type="primary">hemA</name>
    <name type="ordered locus">RP841</name>
</gene>
<feature type="chain" id="PRO_0000163831" description="5-aminolevulinate synthase">
    <location>
        <begin position="1"/>
        <end position="414"/>
    </location>
</feature>
<feature type="active site" evidence="1">
    <location>
        <position position="244"/>
    </location>
</feature>
<feature type="binding site" evidence="1">
    <location>
        <position position="22"/>
    </location>
    <ligand>
        <name>substrate</name>
    </ligand>
</feature>
<feature type="binding site" evidence="1">
    <location>
        <position position="133"/>
    </location>
    <ligand>
        <name>substrate</name>
    </ligand>
</feature>
<feature type="binding site" evidence="1">
    <location>
        <position position="152"/>
    </location>
    <ligand>
        <name>substrate</name>
    </ligand>
</feature>
<feature type="binding site" description="in other chain" evidence="1">
    <location>
        <position position="185"/>
    </location>
    <ligand>
        <name>pyridoxal 5'-phosphate</name>
        <dbReference type="ChEBI" id="CHEBI:597326"/>
        <note>ligand shared between dimeric partners</note>
    </ligand>
</feature>
<feature type="binding site" description="in other chain" evidence="1">
    <location>
        <position position="213"/>
    </location>
    <ligand>
        <name>pyridoxal 5'-phosphate</name>
        <dbReference type="ChEBI" id="CHEBI:597326"/>
        <note>ligand shared between dimeric partners</note>
    </ligand>
</feature>
<feature type="binding site" description="in other chain" evidence="1">
    <location>
        <position position="241"/>
    </location>
    <ligand>
        <name>pyridoxal 5'-phosphate</name>
        <dbReference type="ChEBI" id="CHEBI:597326"/>
        <note>ligand shared between dimeric partners</note>
    </ligand>
</feature>
<feature type="binding site" evidence="1">
    <location>
        <position position="273"/>
    </location>
    <ligand>
        <name>pyridoxal 5'-phosphate</name>
        <dbReference type="ChEBI" id="CHEBI:597326"/>
        <note>ligand shared between dimeric partners</note>
    </ligand>
</feature>
<feature type="binding site" evidence="1">
    <location>
        <position position="274"/>
    </location>
    <ligand>
        <name>pyridoxal 5'-phosphate</name>
        <dbReference type="ChEBI" id="CHEBI:597326"/>
        <note>ligand shared between dimeric partners</note>
    </ligand>
</feature>
<feature type="binding site" evidence="1">
    <location>
        <position position="359"/>
    </location>
    <ligand>
        <name>substrate</name>
    </ligand>
</feature>
<feature type="modified residue" description="N6-(pyridoxal phosphate)lysine" evidence="1">
    <location>
        <position position="244"/>
    </location>
</feature>
<evidence type="ECO:0000250" key="1">
    <source>
        <dbReference type="UniProtKB" id="P18079"/>
    </source>
</evidence>
<evidence type="ECO:0000305" key="2"/>
<comment type="catalytic activity">
    <reaction>
        <text>succinyl-CoA + glycine + H(+) = 5-aminolevulinate + CO2 + CoA</text>
        <dbReference type="Rhea" id="RHEA:12921"/>
        <dbReference type="ChEBI" id="CHEBI:15378"/>
        <dbReference type="ChEBI" id="CHEBI:16526"/>
        <dbReference type="ChEBI" id="CHEBI:57287"/>
        <dbReference type="ChEBI" id="CHEBI:57292"/>
        <dbReference type="ChEBI" id="CHEBI:57305"/>
        <dbReference type="ChEBI" id="CHEBI:356416"/>
        <dbReference type="EC" id="2.3.1.37"/>
    </reaction>
</comment>
<comment type="cofactor">
    <cofactor evidence="1">
        <name>pyridoxal 5'-phosphate</name>
        <dbReference type="ChEBI" id="CHEBI:597326"/>
    </cofactor>
</comment>
<comment type="pathway">
    <text>Porphyrin-containing compound metabolism; protoporphyrin-IX biosynthesis; 5-aminolevulinate from glycine: step 1/1.</text>
</comment>
<comment type="subunit">
    <text evidence="1">Homodimer.</text>
</comment>
<comment type="similarity">
    <text evidence="2">Belongs to the class-II pyridoxal-phosphate-dependent aminotransferase family.</text>
</comment>